<evidence type="ECO:0000255" key="1">
    <source>
        <dbReference type="HAMAP-Rule" id="MF_00740"/>
    </source>
</evidence>
<name>DEOB_COLP3</name>
<accession>Q483R0</accession>
<proteinExistence type="inferred from homology"/>
<organism>
    <name type="scientific">Colwellia psychrerythraea (strain 34H / ATCC BAA-681)</name>
    <name type="common">Vibrio psychroerythus</name>
    <dbReference type="NCBI Taxonomy" id="167879"/>
    <lineage>
        <taxon>Bacteria</taxon>
        <taxon>Pseudomonadati</taxon>
        <taxon>Pseudomonadota</taxon>
        <taxon>Gammaproteobacteria</taxon>
        <taxon>Alteromonadales</taxon>
        <taxon>Colwelliaceae</taxon>
        <taxon>Colwellia</taxon>
    </lineage>
</organism>
<protein>
    <recommendedName>
        <fullName evidence="1">Phosphopentomutase</fullName>
        <ecNumber evidence="1">5.4.2.7</ecNumber>
    </recommendedName>
    <alternativeName>
        <fullName evidence="1">Phosphodeoxyribomutase</fullName>
    </alternativeName>
</protein>
<sequence length="404" mass="44382">MARAIIIVIDSLGIGYSPDAVDFGDVGANTFANLARAYYEETGKEIFLPNLSALGMIKACEQASNQTFPYQGQEPSKGAYGFAQEISTGKDTPSGHWEMAGVPVLFDWGYFTDKNSSFPTSLIDDINRETGFDGILGNCHASGTEILTRLGQEHIETGLPICYTSADSVFQIAAHEEHFGLDNLYKYCETVRELLGDLNIGRVIARPFVGDSADNFARTGNRRDYSVLPPAPTVLDKISQEGTHVISVGKIADIFAHQGIDEKTKATGLNALFDATLDHINTAQDNSLIFTNLVNFDQDFGHRRDAIGYAKELEALDVRIPELFHAMSAEDVLFLTADHGCDPTWPGTEHTREYVPIIAYHHQIDSVNLGNRKTFADLGQSVAELFNVEAMDYGTSFLSEIYSK</sequence>
<reference key="1">
    <citation type="journal article" date="2005" name="Proc. Natl. Acad. Sci. U.S.A.">
        <title>The psychrophilic lifestyle as revealed by the genome sequence of Colwellia psychrerythraea 34H through genomic and proteomic analyses.</title>
        <authorList>
            <person name="Methe B.A."/>
            <person name="Nelson K.E."/>
            <person name="Deming J.W."/>
            <person name="Momen B."/>
            <person name="Melamud E."/>
            <person name="Zhang X."/>
            <person name="Moult J."/>
            <person name="Madupu R."/>
            <person name="Nelson W.C."/>
            <person name="Dodson R.J."/>
            <person name="Brinkac L.M."/>
            <person name="Daugherty S.C."/>
            <person name="Durkin A.S."/>
            <person name="DeBoy R.T."/>
            <person name="Kolonay J.F."/>
            <person name="Sullivan S.A."/>
            <person name="Zhou L."/>
            <person name="Davidsen T.M."/>
            <person name="Wu M."/>
            <person name="Huston A.L."/>
            <person name="Lewis M."/>
            <person name="Weaver B."/>
            <person name="Weidman J.F."/>
            <person name="Khouri H."/>
            <person name="Utterback T.R."/>
            <person name="Feldblyum T.V."/>
            <person name="Fraser C.M."/>
        </authorList>
    </citation>
    <scope>NUCLEOTIDE SEQUENCE [LARGE SCALE GENOMIC DNA]</scope>
    <source>
        <strain>34H / ATCC BAA-681</strain>
    </source>
</reference>
<feature type="chain" id="PRO_0000258281" description="Phosphopentomutase">
    <location>
        <begin position="1"/>
        <end position="404"/>
    </location>
</feature>
<feature type="binding site" evidence="1">
    <location>
        <position position="10"/>
    </location>
    <ligand>
        <name>Mn(2+)</name>
        <dbReference type="ChEBI" id="CHEBI:29035"/>
        <label>1</label>
    </ligand>
</feature>
<feature type="binding site" evidence="1">
    <location>
        <position position="297"/>
    </location>
    <ligand>
        <name>Mn(2+)</name>
        <dbReference type="ChEBI" id="CHEBI:29035"/>
        <label>2</label>
    </ligand>
</feature>
<feature type="binding site" evidence="1">
    <location>
        <position position="302"/>
    </location>
    <ligand>
        <name>Mn(2+)</name>
        <dbReference type="ChEBI" id="CHEBI:29035"/>
        <label>2</label>
    </ligand>
</feature>
<feature type="binding site" evidence="1">
    <location>
        <position position="338"/>
    </location>
    <ligand>
        <name>Mn(2+)</name>
        <dbReference type="ChEBI" id="CHEBI:29035"/>
        <label>1</label>
    </ligand>
</feature>
<feature type="binding site" evidence="1">
    <location>
        <position position="339"/>
    </location>
    <ligand>
        <name>Mn(2+)</name>
        <dbReference type="ChEBI" id="CHEBI:29035"/>
        <label>1</label>
    </ligand>
</feature>
<feature type="binding site" evidence="1">
    <location>
        <position position="350"/>
    </location>
    <ligand>
        <name>Mn(2+)</name>
        <dbReference type="ChEBI" id="CHEBI:29035"/>
        <label>2</label>
    </ligand>
</feature>
<comment type="function">
    <text evidence="1">Isomerase that catalyzes the conversion of deoxy-ribose 1-phosphate (dRib-1-P) and ribose 1-phosphate (Rib-1-P) to deoxy-ribose 5-phosphate (dRib-5-P) and ribose 5-phosphate (Rib-5-P), respectively.</text>
</comment>
<comment type="catalytic activity">
    <reaction evidence="1">
        <text>2-deoxy-alpha-D-ribose 1-phosphate = 2-deoxy-D-ribose 5-phosphate</text>
        <dbReference type="Rhea" id="RHEA:27658"/>
        <dbReference type="ChEBI" id="CHEBI:57259"/>
        <dbReference type="ChEBI" id="CHEBI:62877"/>
        <dbReference type="EC" id="5.4.2.7"/>
    </reaction>
</comment>
<comment type="catalytic activity">
    <reaction evidence="1">
        <text>alpha-D-ribose 1-phosphate = D-ribose 5-phosphate</text>
        <dbReference type="Rhea" id="RHEA:18793"/>
        <dbReference type="ChEBI" id="CHEBI:57720"/>
        <dbReference type="ChEBI" id="CHEBI:78346"/>
        <dbReference type="EC" id="5.4.2.7"/>
    </reaction>
</comment>
<comment type="cofactor">
    <cofactor evidence="1">
        <name>Mn(2+)</name>
        <dbReference type="ChEBI" id="CHEBI:29035"/>
    </cofactor>
    <text evidence="1">Binds 2 manganese ions.</text>
</comment>
<comment type="pathway">
    <text evidence="1">Carbohydrate degradation; 2-deoxy-D-ribose 1-phosphate degradation; D-glyceraldehyde 3-phosphate and acetaldehyde from 2-deoxy-alpha-D-ribose 1-phosphate: step 1/2.</text>
</comment>
<comment type="subcellular location">
    <subcellularLocation>
        <location evidence="1">Cytoplasm</location>
    </subcellularLocation>
</comment>
<comment type="similarity">
    <text evidence="1">Belongs to the phosphopentomutase family.</text>
</comment>
<dbReference type="EC" id="5.4.2.7" evidence="1"/>
<dbReference type="EMBL" id="CP000083">
    <property type="protein sequence ID" value="AAZ25237.1"/>
    <property type="molecule type" value="Genomic_DNA"/>
</dbReference>
<dbReference type="RefSeq" id="WP_011042800.1">
    <property type="nucleotide sequence ID" value="NC_003910.7"/>
</dbReference>
<dbReference type="SMR" id="Q483R0"/>
<dbReference type="STRING" id="167879.CPS_1976"/>
<dbReference type="KEGG" id="cps:CPS_1976"/>
<dbReference type="HOGENOM" id="CLU_053861_0_0_6"/>
<dbReference type="UniPathway" id="UPA00002">
    <property type="reaction ID" value="UER00467"/>
</dbReference>
<dbReference type="Proteomes" id="UP000000547">
    <property type="component" value="Chromosome"/>
</dbReference>
<dbReference type="GO" id="GO:0005829">
    <property type="term" value="C:cytosol"/>
    <property type="evidence" value="ECO:0007669"/>
    <property type="project" value="TreeGrafter"/>
</dbReference>
<dbReference type="GO" id="GO:0000287">
    <property type="term" value="F:magnesium ion binding"/>
    <property type="evidence" value="ECO:0007669"/>
    <property type="project" value="InterPro"/>
</dbReference>
<dbReference type="GO" id="GO:0030145">
    <property type="term" value="F:manganese ion binding"/>
    <property type="evidence" value="ECO:0007669"/>
    <property type="project" value="UniProtKB-UniRule"/>
</dbReference>
<dbReference type="GO" id="GO:0008973">
    <property type="term" value="F:phosphopentomutase activity"/>
    <property type="evidence" value="ECO:0007669"/>
    <property type="project" value="UniProtKB-UniRule"/>
</dbReference>
<dbReference type="GO" id="GO:0006018">
    <property type="term" value="P:2-deoxyribose 1-phosphate catabolic process"/>
    <property type="evidence" value="ECO:0007669"/>
    <property type="project" value="UniProtKB-UniRule"/>
</dbReference>
<dbReference type="GO" id="GO:0006015">
    <property type="term" value="P:5-phosphoribose 1-diphosphate biosynthetic process"/>
    <property type="evidence" value="ECO:0007669"/>
    <property type="project" value="UniProtKB-UniPathway"/>
</dbReference>
<dbReference type="GO" id="GO:0043094">
    <property type="term" value="P:metabolic compound salvage"/>
    <property type="evidence" value="ECO:0007669"/>
    <property type="project" value="InterPro"/>
</dbReference>
<dbReference type="GO" id="GO:0009117">
    <property type="term" value="P:nucleotide metabolic process"/>
    <property type="evidence" value="ECO:0007669"/>
    <property type="project" value="InterPro"/>
</dbReference>
<dbReference type="CDD" id="cd16009">
    <property type="entry name" value="PPM"/>
    <property type="match status" value="1"/>
</dbReference>
<dbReference type="FunFam" id="3.30.70.1250:FF:000001">
    <property type="entry name" value="Phosphopentomutase"/>
    <property type="match status" value="1"/>
</dbReference>
<dbReference type="Gene3D" id="3.40.720.10">
    <property type="entry name" value="Alkaline Phosphatase, subunit A"/>
    <property type="match status" value="1"/>
</dbReference>
<dbReference type="Gene3D" id="3.30.70.1250">
    <property type="entry name" value="Phosphopentomutase"/>
    <property type="match status" value="1"/>
</dbReference>
<dbReference type="HAMAP" id="MF_00740">
    <property type="entry name" value="Phosphopentomut"/>
    <property type="match status" value="1"/>
</dbReference>
<dbReference type="InterPro" id="IPR017850">
    <property type="entry name" value="Alkaline_phosphatase_core_sf"/>
</dbReference>
<dbReference type="InterPro" id="IPR010045">
    <property type="entry name" value="DeoB"/>
</dbReference>
<dbReference type="InterPro" id="IPR006124">
    <property type="entry name" value="Metalloenzyme"/>
</dbReference>
<dbReference type="InterPro" id="IPR024052">
    <property type="entry name" value="Phosphopentomutase_DeoB_cap_sf"/>
</dbReference>
<dbReference type="NCBIfam" id="TIGR01696">
    <property type="entry name" value="deoB"/>
    <property type="match status" value="1"/>
</dbReference>
<dbReference type="NCBIfam" id="NF003766">
    <property type="entry name" value="PRK05362.1"/>
    <property type="match status" value="1"/>
</dbReference>
<dbReference type="PANTHER" id="PTHR21110">
    <property type="entry name" value="PHOSPHOPENTOMUTASE"/>
    <property type="match status" value="1"/>
</dbReference>
<dbReference type="PANTHER" id="PTHR21110:SF0">
    <property type="entry name" value="PHOSPHOPENTOMUTASE"/>
    <property type="match status" value="1"/>
</dbReference>
<dbReference type="Pfam" id="PF01676">
    <property type="entry name" value="Metalloenzyme"/>
    <property type="match status" value="1"/>
</dbReference>
<dbReference type="PIRSF" id="PIRSF001491">
    <property type="entry name" value="Ppentomutase"/>
    <property type="match status" value="1"/>
</dbReference>
<dbReference type="SUPFAM" id="SSF53649">
    <property type="entry name" value="Alkaline phosphatase-like"/>
    <property type="match status" value="1"/>
</dbReference>
<dbReference type="SUPFAM" id="SSF143856">
    <property type="entry name" value="DeoB insert domain-like"/>
    <property type="match status" value="1"/>
</dbReference>
<keyword id="KW-0963">Cytoplasm</keyword>
<keyword id="KW-0413">Isomerase</keyword>
<keyword id="KW-0464">Manganese</keyword>
<keyword id="KW-0479">Metal-binding</keyword>
<gene>
    <name evidence="1" type="primary">deoB</name>
    <name type="ordered locus">CPS_1976</name>
</gene>